<proteinExistence type="inferred from homology"/>
<accession>Q3AMN4</accession>
<protein>
    <recommendedName>
        <fullName evidence="1">Small ribosomal subunit protein uS19</fullName>
    </recommendedName>
    <alternativeName>
        <fullName evidence="2">30S ribosomal protein S19</fullName>
    </alternativeName>
</protein>
<evidence type="ECO:0000255" key="1">
    <source>
        <dbReference type="HAMAP-Rule" id="MF_00531"/>
    </source>
</evidence>
<evidence type="ECO:0000305" key="2"/>
<name>RS19_SYNSC</name>
<reference key="1">
    <citation type="submission" date="2005-07" db="EMBL/GenBank/DDBJ databases">
        <title>Complete sequence of Synechococcus sp. CC9605.</title>
        <authorList>
            <consortium name="US DOE Joint Genome Institute"/>
            <person name="Copeland A."/>
            <person name="Lucas S."/>
            <person name="Lapidus A."/>
            <person name="Barry K."/>
            <person name="Detter J.C."/>
            <person name="Glavina T."/>
            <person name="Hammon N."/>
            <person name="Israni S."/>
            <person name="Pitluck S."/>
            <person name="Schmutz J."/>
            <person name="Martinez M."/>
            <person name="Larimer F."/>
            <person name="Land M."/>
            <person name="Kyrpides N."/>
            <person name="Ivanova N."/>
            <person name="Richardson P."/>
        </authorList>
    </citation>
    <scope>NUCLEOTIDE SEQUENCE [LARGE SCALE GENOMIC DNA]</scope>
    <source>
        <strain>CC9605</strain>
    </source>
</reference>
<gene>
    <name evidence="1" type="primary">rpsS</name>
    <name evidence="1" type="synonym">rps19</name>
    <name type="ordered locus">Syncc9605_0372</name>
</gene>
<feature type="chain" id="PRO_0000265450" description="Small ribosomal subunit protein uS19">
    <location>
        <begin position="1"/>
        <end position="91"/>
    </location>
</feature>
<sequence length="91" mass="10222">MGRSLKKGPFIADSLLRKVEKQNDNDDKSVIKTWSRASTILPMMIGHTIAVHNGRTHVPVFITEQMVGHKLGEFAPTRTFKGHIRDKKGGR</sequence>
<keyword id="KW-0687">Ribonucleoprotein</keyword>
<keyword id="KW-0689">Ribosomal protein</keyword>
<keyword id="KW-0694">RNA-binding</keyword>
<keyword id="KW-0699">rRNA-binding</keyword>
<comment type="function">
    <text evidence="1">Protein S19 forms a complex with S13 that binds strongly to the 16S ribosomal RNA.</text>
</comment>
<comment type="similarity">
    <text evidence="1">Belongs to the universal ribosomal protein uS19 family.</text>
</comment>
<organism>
    <name type="scientific">Synechococcus sp. (strain CC9605)</name>
    <dbReference type="NCBI Taxonomy" id="110662"/>
    <lineage>
        <taxon>Bacteria</taxon>
        <taxon>Bacillati</taxon>
        <taxon>Cyanobacteriota</taxon>
        <taxon>Cyanophyceae</taxon>
        <taxon>Synechococcales</taxon>
        <taxon>Synechococcaceae</taxon>
        <taxon>Synechococcus</taxon>
    </lineage>
</organism>
<dbReference type="EMBL" id="CP000110">
    <property type="protein sequence ID" value="ABB34148.1"/>
    <property type="molecule type" value="Genomic_DNA"/>
</dbReference>
<dbReference type="RefSeq" id="WP_006849645.1">
    <property type="nucleotide sequence ID" value="NC_007516.1"/>
</dbReference>
<dbReference type="SMR" id="Q3AMN4"/>
<dbReference type="STRING" id="110662.Syncc9605_0372"/>
<dbReference type="KEGG" id="syd:Syncc9605_0372"/>
<dbReference type="eggNOG" id="COG0185">
    <property type="taxonomic scope" value="Bacteria"/>
</dbReference>
<dbReference type="HOGENOM" id="CLU_144911_0_1_3"/>
<dbReference type="OrthoDB" id="9797833at2"/>
<dbReference type="GO" id="GO:0005737">
    <property type="term" value="C:cytoplasm"/>
    <property type="evidence" value="ECO:0007669"/>
    <property type="project" value="UniProtKB-ARBA"/>
</dbReference>
<dbReference type="GO" id="GO:0015935">
    <property type="term" value="C:small ribosomal subunit"/>
    <property type="evidence" value="ECO:0007669"/>
    <property type="project" value="InterPro"/>
</dbReference>
<dbReference type="GO" id="GO:0019843">
    <property type="term" value="F:rRNA binding"/>
    <property type="evidence" value="ECO:0007669"/>
    <property type="project" value="UniProtKB-UniRule"/>
</dbReference>
<dbReference type="GO" id="GO:0003735">
    <property type="term" value="F:structural constituent of ribosome"/>
    <property type="evidence" value="ECO:0007669"/>
    <property type="project" value="InterPro"/>
</dbReference>
<dbReference type="GO" id="GO:0000028">
    <property type="term" value="P:ribosomal small subunit assembly"/>
    <property type="evidence" value="ECO:0007669"/>
    <property type="project" value="TreeGrafter"/>
</dbReference>
<dbReference type="GO" id="GO:0006412">
    <property type="term" value="P:translation"/>
    <property type="evidence" value="ECO:0007669"/>
    <property type="project" value="UniProtKB-UniRule"/>
</dbReference>
<dbReference type="FunFam" id="3.30.860.10:FF:000001">
    <property type="entry name" value="30S ribosomal protein S19"/>
    <property type="match status" value="1"/>
</dbReference>
<dbReference type="Gene3D" id="3.30.860.10">
    <property type="entry name" value="30s Ribosomal Protein S19, Chain A"/>
    <property type="match status" value="1"/>
</dbReference>
<dbReference type="HAMAP" id="MF_00531">
    <property type="entry name" value="Ribosomal_uS19"/>
    <property type="match status" value="1"/>
</dbReference>
<dbReference type="InterPro" id="IPR002222">
    <property type="entry name" value="Ribosomal_uS19"/>
</dbReference>
<dbReference type="InterPro" id="IPR005732">
    <property type="entry name" value="Ribosomal_uS19_bac-type"/>
</dbReference>
<dbReference type="InterPro" id="IPR020934">
    <property type="entry name" value="Ribosomal_uS19_CS"/>
</dbReference>
<dbReference type="InterPro" id="IPR023575">
    <property type="entry name" value="Ribosomal_uS19_SF"/>
</dbReference>
<dbReference type="NCBIfam" id="TIGR01050">
    <property type="entry name" value="rpsS_bact"/>
    <property type="match status" value="1"/>
</dbReference>
<dbReference type="PANTHER" id="PTHR11880">
    <property type="entry name" value="RIBOSOMAL PROTEIN S19P FAMILY MEMBER"/>
    <property type="match status" value="1"/>
</dbReference>
<dbReference type="PANTHER" id="PTHR11880:SF8">
    <property type="entry name" value="SMALL RIBOSOMAL SUBUNIT PROTEIN US19M"/>
    <property type="match status" value="1"/>
</dbReference>
<dbReference type="Pfam" id="PF00203">
    <property type="entry name" value="Ribosomal_S19"/>
    <property type="match status" value="1"/>
</dbReference>
<dbReference type="PIRSF" id="PIRSF002144">
    <property type="entry name" value="Ribosomal_S19"/>
    <property type="match status" value="1"/>
</dbReference>
<dbReference type="PRINTS" id="PR00975">
    <property type="entry name" value="RIBOSOMALS19"/>
</dbReference>
<dbReference type="SUPFAM" id="SSF54570">
    <property type="entry name" value="Ribosomal protein S19"/>
    <property type="match status" value="1"/>
</dbReference>
<dbReference type="PROSITE" id="PS00323">
    <property type="entry name" value="RIBOSOMAL_S19"/>
    <property type="match status" value="1"/>
</dbReference>